<proteinExistence type="inferred from homology"/>
<organism>
    <name type="scientific">Escherichia coli O6:K15:H31 (strain 536 / UPEC)</name>
    <dbReference type="NCBI Taxonomy" id="362663"/>
    <lineage>
        <taxon>Bacteria</taxon>
        <taxon>Pseudomonadati</taxon>
        <taxon>Pseudomonadota</taxon>
        <taxon>Gammaproteobacteria</taxon>
        <taxon>Enterobacterales</taxon>
        <taxon>Enterobacteriaceae</taxon>
        <taxon>Escherichia</taxon>
    </lineage>
</organism>
<evidence type="ECO:0000255" key="1">
    <source>
        <dbReference type="HAMAP-Rule" id="MF_00523"/>
    </source>
</evidence>
<comment type="function">
    <text evidence="1">Catalyzes the N-acylation of UDP-3-O-(hydroxytetradecanoyl)glucosamine using 3-hydroxytetradecanoyl-ACP as the acyl donor. Is involved in the biosynthesis of lipid A, a phosphorylated glycolipid that anchors the lipopolysaccharide to the outer membrane of the cell.</text>
</comment>
<comment type="catalytic activity">
    <reaction evidence="1">
        <text>a UDP-3-O-[(3R)-3-hydroxyacyl]-alpha-D-glucosamine + a (3R)-hydroxyacyl-[ACP] = a UDP-2-N,3-O-bis[(3R)-3-hydroxyacyl]-alpha-D-glucosamine + holo-[ACP] + H(+)</text>
        <dbReference type="Rhea" id="RHEA:53836"/>
        <dbReference type="Rhea" id="RHEA-COMP:9685"/>
        <dbReference type="Rhea" id="RHEA-COMP:9945"/>
        <dbReference type="ChEBI" id="CHEBI:15378"/>
        <dbReference type="ChEBI" id="CHEBI:64479"/>
        <dbReference type="ChEBI" id="CHEBI:78827"/>
        <dbReference type="ChEBI" id="CHEBI:137740"/>
        <dbReference type="ChEBI" id="CHEBI:137748"/>
        <dbReference type="EC" id="2.3.1.191"/>
    </reaction>
</comment>
<comment type="catalytic activity">
    <reaction evidence="1">
        <text>UDP-3-O-[(3R)-3-hydroxytetradecanoyl]-alpha-D-glucosamine + (3R)-hydroxytetradecanoyl-[ACP] = UDP-2-N,3-O-bis[(3R)-3-hydroxytetradecanoyl]-alpha-D-glucosamine + holo-[ACP] + H(+)</text>
        <dbReference type="Rhea" id="RHEA:17817"/>
        <dbReference type="Rhea" id="RHEA-COMP:9646"/>
        <dbReference type="Rhea" id="RHEA-COMP:9685"/>
        <dbReference type="ChEBI" id="CHEBI:15378"/>
        <dbReference type="ChEBI" id="CHEBI:64479"/>
        <dbReference type="ChEBI" id="CHEBI:71573"/>
        <dbReference type="ChEBI" id="CHEBI:78474"/>
        <dbReference type="ChEBI" id="CHEBI:78847"/>
    </reaction>
</comment>
<comment type="pathway">
    <text evidence="1">Glycolipid biosynthesis; lipid IV(A) biosynthesis; lipid IV(A) from (3R)-3-hydroxytetradecanoyl-[acyl-carrier-protein] and UDP-N-acetyl-alpha-D-glucosamine: step 3/6.</text>
</comment>
<comment type="subunit">
    <text evidence="1">Homotrimer.</text>
</comment>
<comment type="similarity">
    <text evidence="1">Belongs to the transferase hexapeptide repeat family. LpxD subfamily.</text>
</comment>
<name>LPXD_ECOL5</name>
<dbReference type="EC" id="2.3.1.191" evidence="1"/>
<dbReference type="EMBL" id="CP000247">
    <property type="protein sequence ID" value="ABG68227.1"/>
    <property type="molecule type" value="Genomic_DNA"/>
</dbReference>
<dbReference type="RefSeq" id="WP_001139282.1">
    <property type="nucleotide sequence ID" value="NC_008253.1"/>
</dbReference>
<dbReference type="SMR" id="Q0TLF4"/>
<dbReference type="GeneID" id="93777246"/>
<dbReference type="KEGG" id="ecp:ECP_0187"/>
<dbReference type="HOGENOM" id="CLU_049865_0_1_6"/>
<dbReference type="UniPathway" id="UPA00359">
    <property type="reaction ID" value="UER00479"/>
</dbReference>
<dbReference type="Proteomes" id="UP000009182">
    <property type="component" value="Chromosome"/>
</dbReference>
<dbReference type="GO" id="GO:0016020">
    <property type="term" value="C:membrane"/>
    <property type="evidence" value="ECO:0007669"/>
    <property type="project" value="GOC"/>
</dbReference>
<dbReference type="GO" id="GO:0016410">
    <property type="term" value="F:N-acyltransferase activity"/>
    <property type="evidence" value="ECO:0007669"/>
    <property type="project" value="InterPro"/>
</dbReference>
<dbReference type="GO" id="GO:0103118">
    <property type="term" value="F:UDP-3-O-(R-3-hydroxymyristoyl)-glucosamine N-acyltransferase activity"/>
    <property type="evidence" value="ECO:0007669"/>
    <property type="project" value="UniProtKB-EC"/>
</dbReference>
<dbReference type="GO" id="GO:0009245">
    <property type="term" value="P:lipid A biosynthetic process"/>
    <property type="evidence" value="ECO:0007669"/>
    <property type="project" value="UniProtKB-UniRule"/>
</dbReference>
<dbReference type="CDD" id="cd03352">
    <property type="entry name" value="LbH_LpxD"/>
    <property type="match status" value="1"/>
</dbReference>
<dbReference type="FunFam" id="1.20.5.170:FF:000032">
    <property type="entry name" value="UDP-3-O-(3-hydroxymyristoyl)glucosamine N-acyltransferase"/>
    <property type="match status" value="1"/>
</dbReference>
<dbReference type="FunFam" id="2.160.10.10:FF:000005">
    <property type="entry name" value="UDP-3-O-(3-hydroxymyristoyl)glucosamine N-acyltransferase"/>
    <property type="match status" value="1"/>
</dbReference>
<dbReference type="FunFam" id="3.40.1390.10:FF:000001">
    <property type="entry name" value="UDP-3-O-(3-hydroxymyristoyl)glucosamine N-acyltransferase"/>
    <property type="match status" value="1"/>
</dbReference>
<dbReference type="Gene3D" id="1.20.5.170">
    <property type="match status" value="1"/>
</dbReference>
<dbReference type="Gene3D" id="2.160.10.10">
    <property type="entry name" value="Hexapeptide repeat proteins"/>
    <property type="match status" value="1"/>
</dbReference>
<dbReference type="Gene3D" id="3.40.1390.10">
    <property type="entry name" value="MurE/MurF, N-terminal domain"/>
    <property type="match status" value="1"/>
</dbReference>
<dbReference type="HAMAP" id="MF_00523">
    <property type="entry name" value="LpxD"/>
    <property type="match status" value="1"/>
</dbReference>
<dbReference type="InterPro" id="IPR001451">
    <property type="entry name" value="Hexapep"/>
</dbReference>
<dbReference type="InterPro" id="IPR018357">
    <property type="entry name" value="Hexapep_transf_CS"/>
</dbReference>
<dbReference type="InterPro" id="IPR007691">
    <property type="entry name" value="LpxD"/>
</dbReference>
<dbReference type="InterPro" id="IPR011004">
    <property type="entry name" value="Trimer_LpxA-like_sf"/>
</dbReference>
<dbReference type="InterPro" id="IPR020573">
    <property type="entry name" value="UDP_GlcNAc_AcTrfase_non-rep"/>
</dbReference>
<dbReference type="NCBIfam" id="TIGR01853">
    <property type="entry name" value="lipid_A_lpxD"/>
    <property type="match status" value="1"/>
</dbReference>
<dbReference type="NCBIfam" id="NF002060">
    <property type="entry name" value="PRK00892.1"/>
    <property type="match status" value="1"/>
</dbReference>
<dbReference type="PANTHER" id="PTHR43378">
    <property type="entry name" value="UDP-3-O-ACYLGLUCOSAMINE N-ACYLTRANSFERASE"/>
    <property type="match status" value="1"/>
</dbReference>
<dbReference type="PANTHER" id="PTHR43378:SF2">
    <property type="entry name" value="UDP-3-O-ACYLGLUCOSAMINE N-ACYLTRANSFERASE 1, MITOCHONDRIAL-RELATED"/>
    <property type="match status" value="1"/>
</dbReference>
<dbReference type="Pfam" id="PF00132">
    <property type="entry name" value="Hexapep"/>
    <property type="match status" value="3"/>
</dbReference>
<dbReference type="Pfam" id="PF04613">
    <property type="entry name" value="LpxD"/>
    <property type="match status" value="1"/>
</dbReference>
<dbReference type="SUPFAM" id="SSF51161">
    <property type="entry name" value="Trimeric LpxA-like enzymes"/>
    <property type="match status" value="1"/>
</dbReference>
<dbReference type="PROSITE" id="PS00101">
    <property type="entry name" value="HEXAPEP_TRANSFERASES"/>
    <property type="match status" value="4"/>
</dbReference>
<gene>
    <name evidence="1" type="primary">lpxD</name>
    <name type="ordered locus">ECP_0187</name>
</gene>
<reference key="1">
    <citation type="journal article" date="2006" name="Mol. Microbiol.">
        <title>Role of pathogenicity island-associated integrases in the genome plasticity of uropathogenic Escherichia coli strain 536.</title>
        <authorList>
            <person name="Hochhut B."/>
            <person name="Wilde C."/>
            <person name="Balling G."/>
            <person name="Middendorf B."/>
            <person name="Dobrindt U."/>
            <person name="Brzuszkiewicz E."/>
            <person name="Gottschalk G."/>
            <person name="Carniel E."/>
            <person name="Hacker J."/>
        </authorList>
    </citation>
    <scope>NUCLEOTIDE SEQUENCE [LARGE SCALE GENOMIC DNA]</scope>
    <source>
        <strain>536 / UPEC</strain>
    </source>
</reference>
<feature type="chain" id="PRO_0000264367" description="UDP-3-O-(3-hydroxymyristoyl)glucosamine N-acyltransferase">
    <location>
        <begin position="1"/>
        <end position="341"/>
    </location>
</feature>
<feature type="active site" description="Proton acceptor" evidence="1">
    <location>
        <position position="239"/>
    </location>
</feature>
<sequence length="341" mass="36024">MPSIRLADLAQQLDAELHGDGDIVITGVASMQSAQTGHITFMVNPKYREHLGLCQASAVVMTQDDLPFAKSAALVVKNPYLTYARMAQILDTTPQPAQNIAPSAVIDATAKLGNNVSIGANAVIESGVELGDNVIIGAGCFVGKNSKIGAGSRLWANVTIYHEIQIGQNCLIQSGTVVGADGFGYANDRGNWVKIPQIGRVIIGDRVEIGACTTIDRGALDDTVIGNGVIIDNQCQIAHNVVIGDNTAVAGGVIMAGSLKIGRYCMIGGASVINGHMEICDKVTVTGMGMVMRPITEPGVYSSGIPLQPNKVWRKTAALVMNIDDMSKRLKSLERKVNQQD</sequence>
<protein>
    <recommendedName>
        <fullName evidence="1">UDP-3-O-(3-hydroxymyristoyl)glucosamine N-acyltransferase</fullName>
        <shortName evidence="1">UDP-3-O-(3-OHC14)-GlcN N-acyltransferase</shortName>
        <ecNumber evidence="1">2.3.1.191</ecNumber>
    </recommendedName>
    <alternativeName>
        <fullName evidence="1">UDP-3-O-(3-hydroxytetradecanoyl)glucosamine N-acyltransferase</fullName>
    </alternativeName>
</protein>
<keyword id="KW-0012">Acyltransferase</keyword>
<keyword id="KW-0441">Lipid A biosynthesis</keyword>
<keyword id="KW-0444">Lipid biosynthesis</keyword>
<keyword id="KW-0443">Lipid metabolism</keyword>
<keyword id="KW-0677">Repeat</keyword>
<keyword id="KW-0808">Transferase</keyword>
<accession>Q0TLF4</accession>